<accession>Q0I160</accession>
<comment type="function">
    <text evidence="1">One of the primary rRNA binding proteins. Required for association of the 30S and 50S subunits to form the 70S ribosome, for tRNA binding and peptide bond formation. It has been suggested to have peptidyltransferase activity; this is somewhat controversial. Makes several contacts with the 16S rRNA in the 70S ribosome.</text>
</comment>
<comment type="subunit">
    <text evidence="1">Part of the 50S ribosomal subunit. Forms a bridge to the 30S subunit in the 70S ribosome.</text>
</comment>
<comment type="similarity">
    <text evidence="1">Belongs to the universal ribosomal protein uL2 family.</text>
</comment>
<gene>
    <name evidence="1" type="primary">rplB</name>
    <name type="ordered locus">HS_0062</name>
</gene>
<dbReference type="EMBL" id="CP000436">
    <property type="protein sequence ID" value="ABI24343.1"/>
    <property type="molecule type" value="Genomic_DNA"/>
</dbReference>
<dbReference type="SMR" id="Q0I160"/>
<dbReference type="KEGG" id="hso:HS_0062"/>
<dbReference type="eggNOG" id="COG0090">
    <property type="taxonomic scope" value="Bacteria"/>
</dbReference>
<dbReference type="HOGENOM" id="CLU_036235_2_1_6"/>
<dbReference type="GO" id="GO:0015934">
    <property type="term" value="C:large ribosomal subunit"/>
    <property type="evidence" value="ECO:0007669"/>
    <property type="project" value="InterPro"/>
</dbReference>
<dbReference type="GO" id="GO:0019843">
    <property type="term" value="F:rRNA binding"/>
    <property type="evidence" value="ECO:0007669"/>
    <property type="project" value="UniProtKB-UniRule"/>
</dbReference>
<dbReference type="GO" id="GO:0003735">
    <property type="term" value="F:structural constituent of ribosome"/>
    <property type="evidence" value="ECO:0007669"/>
    <property type="project" value="InterPro"/>
</dbReference>
<dbReference type="GO" id="GO:0016740">
    <property type="term" value="F:transferase activity"/>
    <property type="evidence" value="ECO:0007669"/>
    <property type="project" value="InterPro"/>
</dbReference>
<dbReference type="GO" id="GO:0002181">
    <property type="term" value="P:cytoplasmic translation"/>
    <property type="evidence" value="ECO:0007669"/>
    <property type="project" value="TreeGrafter"/>
</dbReference>
<dbReference type="FunFam" id="2.30.30.30:FF:000001">
    <property type="entry name" value="50S ribosomal protein L2"/>
    <property type="match status" value="1"/>
</dbReference>
<dbReference type="FunFam" id="2.40.50.140:FF:000003">
    <property type="entry name" value="50S ribosomal protein L2"/>
    <property type="match status" value="1"/>
</dbReference>
<dbReference type="FunFam" id="4.10.950.10:FF:000001">
    <property type="entry name" value="50S ribosomal protein L2"/>
    <property type="match status" value="1"/>
</dbReference>
<dbReference type="Gene3D" id="2.30.30.30">
    <property type="match status" value="1"/>
</dbReference>
<dbReference type="Gene3D" id="2.40.50.140">
    <property type="entry name" value="Nucleic acid-binding proteins"/>
    <property type="match status" value="1"/>
</dbReference>
<dbReference type="Gene3D" id="4.10.950.10">
    <property type="entry name" value="Ribosomal protein L2, domain 3"/>
    <property type="match status" value="1"/>
</dbReference>
<dbReference type="HAMAP" id="MF_01320_B">
    <property type="entry name" value="Ribosomal_uL2_B"/>
    <property type="match status" value="1"/>
</dbReference>
<dbReference type="InterPro" id="IPR012340">
    <property type="entry name" value="NA-bd_OB-fold"/>
</dbReference>
<dbReference type="InterPro" id="IPR014722">
    <property type="entry name" value="Rib_uL2_dom2"/>
</dbReference>
<dbReference type="InterPro" id="IPR002171">
    <property type="entry name" value="Ribosomal_uL2"/>
</dbReference>
<dbReference type="InterPro" id="IPR005880">
    <property type="entry name" value="Ribosomal_uL2_bac/org-type"/>
</dbReference>
<dbReference type="InterPro" id="IPR022669">
    <property type="entry name" value="Ribosomal_uL2_C"/>
</dbReference>
<dbReference type="InterPro" id="IPR022671">
    <property type="entry name" value="Ribosomal_uL2_CS"/>
</dbReference>
<dbReference type="InterPro" id="IPR014726">
    <property type="entry name" value="Ribosomal_uL2_dom3"/>
</dbReference>
<dbReference type="InterPro" id="IPR022666">
    <property type="entry name" value="Ribosomal_uL2_RNA-bd_dom"/>
</dbReference>
<dbReference type="InterPro" id="IPR008991">
    <property type="entry name" value="Translation_prot_SH3-like_sf"/>
</dbReference>
<dbReference type="NCBIfam" id="TIGR01171">
    <property type="entry name" value="rplB_bact"/>
    <property type="match status" value="1"/>
</dbReference>
<dbReference type="PANTHER" id="PTHR13691:SF5">
    <property type="entry name" value="LARGE RIBOSOMAL SUBUNIT PROTEIN UL2M"/>
    <property type="match status" value="1"/>
</dbReference>
<dbReference type="PANTHER" id="PTHR13691">
    <property type="entry name" value="RIBOSOMAL PROTEIN L2"/>
    <property type="match status" value="1"/>
</dbReference>
<dbReference type="Pfam" id="PF00181">
    <property type="entry name" value="Ribosomal_L2"/>
    <property type="match status" value="1"/>
</dbReference>
<dbReference type="Pfam" id="PF03947">
    <property type="entry name" value="Ribosomal_L2_C"/>
    <property type="match status" value="1"/>
</dbReference>
<dbReference type="PIRSF" id="PIRSF002158">
    <property type="entry name" value="Ribosomal_L2"/>
    <property type="match status" value="1"/>
</dbReference>
<dbReference type="SMART" id="SM01383">
    <property type="entry name" value="Ribosomal_L2"/>
    <property type="match status" value="1"/>
</dbReference>
<dbReference type="SMART" id="SM01382">
    <property type="entry name" value="Ribosomal_L2_C"/>
    <property type="match status" value="1"/>
</dbReference>
<dbReference type="SUPFAM" id="SSF50249">
    <property type="entry name" value="Nucleic acid-binding proteins"/>
    <property type="match status" value="1"/>
</dbReference>
<dbReference type="SUPFAM" id="SSF50104">
    <property type="entry name" value="Translation proteins SH3-like domain"/>
    <property type="match status" value="1"/>
</dbReference>
<dbReference type="PROSITE" id="PS00467">
    <property type="entry name" value="RIBOSOMAL_L2"/>
    <property type="match status" value="1"/>
</dbReference>
<sequence length="273" mass="30016">MAIVKCKPTSAGRRHVVKIVNPELHKGKPYAPLLGIKSKTGGRNNLGRITTRHIGGGHKQHYRVIDFKRNKLDIPAVVERLEYDPNRSANIALVLYKDGERRYILAPKGLSAGDQIQSGINAPIKIGNSLPMRNIPVGSTVHNVELKPGKGGQIARSAGAYVQIIAREGNYVTLRLRSGEMRKVLSECVATIGEVGNSEHMLRVLGKAGANRWRGVRPTVRGTAMNPVDHPHGGGEGRNFGKHPVTPWGVQTKGKKTRHNKRTDKYIVRRRGK</sequence>
<reference key="1">
    <citation type="journal article" date="2007" name="J. Bacteriol.">
        <title>Complete genome sequence of Haemophilus somnus (Histophilus somni) strain 129Pt and comparison to Haemophilus ducreyi 35000HP and Haemophilus influenzae Rd.</title>
        <authorList>
            <person name="Challacombe J.F."/>
            <person name="Duncan A.J."/>
            <person name="Brettin T.S."/>
            <person name="Bruce D."/>
            <person name="Chertkov O."/>
            <person name="Detter J.C."/>
            <person name="Han C.S."/>
            <person name="Misra M."/>
            <person name="Richardson P."/>
            <person name="Tapia R."/>
            <person name="Thayer N."/>
            <person name="Xie G."/>
            <person name="Inzana T.J."/>
        </authorList>
    </citation>
    <scope>NUCLEOTIDE SEQUENCE [LARGE SCALE GENOMIC DNA]</scope>
    <source>
        <strain>129Pt</strain>
    </source>
</reference>
<evidence type="ECO:0000255" key="1">
    <source>
        <dbReference type="HAMAP-Rule" id="MF_01320"/>
    </source>
</evidence>
<evidence type="ECO:0000256" key="2">
    <source>
        <dbReference type="SAM" id="MobiDB-lite"/>
    </source>
</evidence>
<evidence type="ECO:0000305" key="3"/>
<feature type="chain" id="PRO_0000309928" description="Large ribosomal subunit protein uL2">
    <location>
        <begin position="1"/>
        <end position="273"/>
    </location>
</feature>
<feature type="region of interest" description="Disordered" evidence="2">
    <location>
        <begin position="221"/>
        <end position="263"/>
    </location>
</feature>
<feature type="compositionally biased region" description="Basic residues" evidence="2">
    <location>
        <begin position="253"/>
        <end position="263"/>
    </location>
</feature>
<name>RL2_HISS1</name>
<protein>
    <recommendedName>
        <fullName evidence="1">Large ribosomal subunit protein uL2</fullName>
    </recommendedName>
    <alternativeName>
        <fullName evidence="3">50S ribosomal protein L2</fullName>
    </alternativeName>
</protein>
<proteinExistence type="inferred from homology"/>
<keyword id="KW-0687">Ribonucleoprotein</keyword>
<keyword id="KW-0689">Ribosomal protein</keyword>
<keyword id="KW-0694">RNA-binding</keyword>
<keyword id="KW-0699">rRNA-binding</keyword>
<organism>
    <name type="scientific">Histophilus somni (strain 129Pt)</name>
    <name type="common">Haemophilus somnus</name>
    <dbReference type="NCBI Taxonomy" id="205914"/>
    <lineage>
        <taxon>Bacteria</taxon>
        <taxon>Pseudomonadati</taxon>
        <taxon>Pseudomonadota</taxon>
        <taxon>Gammaproteobacteria</taxon>
        <taxon>Pasteurellales</taxon>
        <taxon>Pasteurellaceae</taxon>
        <taxon>Histophilus</taxon>
    </lineage>
</organism>